<name>THOC3_MOUSE</name>
<gene>
    <name type="primary">Thoc3</name>
</gene>
<keyword id="KW-0007">Acetylation</keyword>
<keyword id="KW-0507">mRNA processing</keyword>
<keyword id="KW-0508">mRNA splicing</keyword>
<keyword id="KW-0509">mRNA transport</keyword>
<keyword id="KW-0539">Nucleus</keyword>
<keyword id="KW-1185">Reference proteome</keyword>
<keyword id="KW-0677">Repeat</keyword>
<keyword id="KW-0694">RNA-binding</keyword>
<keyword id="KW-0813">Transport</keyword>
<keyword id="KW-0853">WD repeat</keyword>
<feature type="initiator methionine" description="Removed" evidence="1">
    <location>
        <position position="1"/>
    </location>
</feature>
<feature type="chain" id="PRO_0000051274" description="THO complex subunit 3">
    <location>
        <begin position="2"/>
        <end position="351"/>
    </location>
</feature>
<feature type="repeat" description="WD 1" evidence="1">
    <location>
        <begin position="53"/>
        <end position="94"/>
    </location>
</feature>
<feature type="repeat" description="WD 2" evidence="1">
    <location>
        <begin position="97"/>
        <end position="137"/>
    </location>
</feature>
<feature type="repeat" description="WD 3" evidence="1">
    <location>
        <begin position="139"/>
        <end position="178"/>
    </location>
</feature>
<feature type="repeat" description="WD 4" evidence="1">
    <location>
        <begin position="180"/>
        <end position="221"/>
    </location>
</feature>
<feature type="repeat" description="WD 5" evidence="1">
    <location>
        <begin position="222"/>
        <end position="261"/>
    </location>
</feature>
<feature type="repeat" description="WD 6" evidence="1">
    <location>
        <begin position="264"/>
        <end position="303"/>
    </location>
</feature>
<feature type="modified residue" description="N-acetylalanine" evidence="1">
    <location>
        <position position="2"/>
    </location>
</feature>
<feature type="sequence conflict" description="In Ref. 1; BAB27103." evidence="2" ref="1">
    <original>A</original>
    <variation>V</variation>
    <location>
        <position position="12"/>
    </location>
</feature>
<feature type="sequence conflict" description="In Ref. 1; BAB27103." evidence="2" ref="1">
    <original>W</original>
    <variation>S</variation>
    <location>
        <position position="251"/>
    </location>
</feature>
<feature type="sequence conflict" description="In Ref. 1; BAB27103." evidence="2" ref="1">
    <original>F</original>
    <variation>I</variation>
    <location>
        <position position="289"/>
    </location>
</feature>
<protein>
    <recommendedName>
        <fullName>THO complex subunit 3</fullName>
        <shortName>Tho3</shortName>
    </recommendedName>
</protein>
<dbReference type="EMBL" id="AK010668">
    <property type="protein sequence ID" value="BAB27103.1"/>
    <property type="molecule type" value="mRNA"/>
</dbReference>
<dbReference type="EMBL" id="BC019603">
    <property type="protein sequence ID" value="AAH19603.1"/>
    <property type="molecule type" value="mRNA"/>
</dbReference>
<dbReference type="CCDS" id="CCDS26527.1"/>
<dbReference type="RefSeq" id="NP_082873.2">
    <property type="nucleotide sequence ID" value="NM_028597.3"/>
</dbReference>
<dbReference type="SMR" id="Q8VE80"/>
<dbReference type="BioGRID" id="216177">
    <property type="interactions" value="3"/>
</dbReference>
<dbReference type="FunCoup" id="Q8VE80">
    <property type="interactions" value="2438"/>
</dbReference>
<dbReference type="IntAct" id="Q8VE80">
    <property type="interactions" value="1"/>
</dbReference>
<dbReference type="STRING" id="10090.ENSMUSP00000026990"/>
<dbReference type="iPTMnet" id="Q8VE80"/>
<dbReference type="PhosphoSitePlus" id="Q8VE80"/>
<dbReference type="SwissPalm" id="Q8VE80"/>
<dbReference type="PaxDb" id="10090-ENSMUSP00000026990"/>
<dbReference type="PeptideAtlas" id="Q8VE80"/>
<dbReference type="ProteomicsDB" id="262918"/>
<dbReference type="Pumba" id="Q8VE80"/>
<dbReference type="Antibodypedia" id="17111">
    <property type="antibodies" value="169 antibodies from 24 providers"/>
</dbReference>
<dbReference type="DNASU" id="73666"/>
<dbReference type="Ensembl" id="ENSMUST00000026990.6">
    <property type="protein sequence ID" value="ENSMUSP00000026990.6"/>
    <property type="gene ID" value="ENSMUSG00000025872.6"/>
</dbReference>
<dbReference type="GeneID" id="73666"/>
<dbReference type="KEGG" id="mmu:73666"/>
<dbReference type="UCSC" id="uc007qod.2">
    <property type="organism name" value="mouse"/>
</dbReference>
<dbReference type="AGR" id="MGI:1920916"/>
<dbReference type="CTD" id="84321"/>
<dbReference type="MGI" id="MGI:1920916">
    <property type="gene designation" value="Thoc3"/>
</dbReference>
<dbReference type="VEuPathDB" id="HostDB:ENSMUSG00000025872"/>
<dbReference type="eggNOG" id="KOG1407">
    <property type="taxonomic scope" value="Eukaryota"/>
</dbReference>
<dbReference type="GeneTree" id="ENSGT00940000158129"/>
<dbReference type="HOGENOM" id="CLU_045202_0_0_1"/>
<dbReference type="InParanoid" id="Q8VE80"/>
<dbReference type="OMA" id="WNADGRH"/>
<dbReference type="OrthoDB" id="340259at2759"/>
<dbReference type="PhylomeDB" id="Q8VE80"/>
<dbReference type="TreeFam" id="TF314069"/>
<dbReference type="Reactome" id="R-MMU-159236">
    <property type="pathway name" value="Transport of Mature mRNA derived from an Intron-Containing Transcript"/>
</dbReference>
<dbReference type="Reactome" id="R-MMU-72187">
    <property type="pathway name" value="mRNA 3'-end processing"/>
</dbReference>
<dbReference type="Reactome" id="R-MMU-73856">
    <property type="pathway name" value="RNA Polymerase II Transcription Termination"/>
</dbReference>
<dbReference type="BioGRID-ORCS" id="73666">
    <property type="hits" value="30 hits in 80 CRISPR screens"/>
</dbReference>
<dbReference type="ChiTaRS" id="Thoc3">
    <property type="organism name" value="mouse"/>
</dbReference>
<dbReference type="PRO" id="PR:Q8VE80"/>
<dbReference type="Proteomes" id="UP000000589">
    <property type="component" value="Chromosome 13"/>
</dbReference>
<dbReference type="RNAct" id="Q8VE80">
    <property type="molecule type" value="protein"/>
</dbReference>
<dbReference type="Bgee" id="ENSMUSG00000025872">
    <property type="expression patterns" value="Expressed in urogenital fold and 268 other cell types or tissues"/>
</dbReference>
<dbReference type="GO" id="GO:0000781">
    <property type="term" value="C:chromosome, telomeric region"/>
    <property type="evidence" value="ECO:0007669"/>
    <property type="project" value="Ensembl"/>
</dbReference>
<dbReference type="GO" id="GO:0016607">
    <property type="term" value="C:nuclear speck"/>
    <property type="evidence" value="ECO:0007669"/>
    <property type="project" value="UniProtKB-SubCell"/>
</dbReference>
<dbReference type="GO" id="GO:0000445">
    <property type="term" value="C:THO complex part of transcription export complex"/>
    <property type="evidence" value="ECO:0000250"/>
    <property type="project" value="UniProtKB"/>
</dbReference>
<dbReference type="GO" id="GO:0003723">
    <property type="term" value="F:RNA binding"/>
    <property type="evidence" value="ECO:0007669"/>
    <property type="project" value="UniProtKB-KW"/>
</dbReference>
<dbReference type="GO" id="GO:0006406">
    <property type="term" value="P:mRNA export from nucleus"/>
    <property type="evidence" value="ECO:0007669"/>
    <property type="project" value="Ensembl"/>
</dbReference>
<dbReference type="GO" id="GO:0006397">
    <property type="term" value="P:mRNA processing"/>
    <property type="evidence" value="ECO:0007669"/>
    <property type="project" value="UniProtKB-KW"/>
</dbReference>
<dbReference type="GO" id="GO:0008380">
    <property type="term" value="P:RNA splicing"/>
    <property type="evidence" value="ECO:0007669"/>
    <property type="project" value="UniProtKB-KW"/>
</dbReference>
<dbReference type="CDD" id="cd00200">
    <property type="entry name" value="WD40"/>
    <property type="match status" value="1"/>
</dbReference>
<dbReference type="FunFam" id="2.130.10.10:FF:000122">
    <property type="entry name" value="THO complex subunit 3"/>
    <property type="match status" value="1"/>
</dbReference>
<dbReference type="FunFam" id="2.130.10.10:FF:000166">
    <property type="entry name" value="THO complex subunit 3"/>
    <property type="match status" value="1"/>
</dbReference>
<dbReference type="Gene3D" id="2.130.10.10">
    <property type="entry name" value="YVTN repeat-like/Quinoprotein amine dehydrogenase"/>
    <property type="match status" value="2"/>
</dbReference>
<dbReference type="InterPro" id="IPR020472">
    <property type="entry name" value="G-protein_beta_WD-40_rep"/>
</dbReference>
<dbReference type="InterPro" id="IPR040132">
    <property type="entry name" value="Tex1/THOC3"/>
</dbReference>
<dbReference type="InterPro" id="IPR015943">
    <property type="entry name" value="WD40/YVTN_repeat-like_dom_sf"/>
</dbReference>
<dbReference type="InterPro" id="IPR036322">
    <property type="entry name" value="WD40_repeat_dom_sf"/>
</dbReference>
<dbReference type="InterPro" id="IPR001680">
    <property type="entry name" value="WD40_rpt"/>
</dbReference>
<dbReference type="PANTHER" id="PTHR22839:SF0">
    <property type="entry name" value="THO COMPLEX SUBUNIT 3"/>
    <property type="match status" value="1"/>
</dbReference>
<dbReference type="PANTHER" id="PTHR22839">
    <property type="entry name" value="THO COMPLEX SUBUNIT 3 THO3"/>
    <property type="match status" value="1"/>
</dbReference>
<dbReference type="Pfam" id="PF25174">
    <property type="entry name" value="Beta-prop_THOC3"/>
    <property type="match status" value="1"/>
</dbReference>
<dbReference type="PRINTS" id="PR00320">
    <property type="entry name" value="GPROTEINBRPT"/>
</dbReference>
<dbReference type="SMART" id="SM00320">
    <property type="entry name" value="WD40"/>
    <property type="match status" value="6"/>
</dbReference>
<dbReference type="SUPFAM" id="SSF50978">
    <property type="entry name" value="WD40 repeat-like"/>
    <property type="match status" value="1"/>
</dbReference>
<dbReference type="PROSITE" id="PS50082">
    <property type="entry name" value="WD_REPEATS_2"/>
    <property type="match status" value="3"/>
</dbReference>
<dbReference type="PROSITE" id="PS50294">
    <property type="entry name" value="WD_REPEATS_REGION"/>
    <property type="match status" value="1"/>
</dbReference>
<sequence length="351" mass="38738">MAAPAAVLGPSALGQSGPGSMAPWCSVSSGPSRYVLGMQELFRGHSKTREFPAHSAKVHSVAWSCDGRRLASGSFDKTASVFLLEKDRLVKENNYRGHGDSVDQLCWHPSNPDLFVTASGDKTIRIWDVRTTKCIATVNTKGENINICWSPDGQTIAVGNKDDVVTFIDAKTHRSKAEEQFKFEVNEISWNNDNNMFFLTNGNGCINILSYPELKPVQSINAHPSNCICIKFDPMGKYFATGSADALVSLWDVDELVCVRCFSRLDWPVRTLSFSHDGKMLASASEDHFIDIAEVETGDKLWEVQCESPTFTVAWHPKRPLLAFACDDKDGKYDSSREAGTVKLFGLPNDS</sequence>
<organism>
    <name type="scientific">Mus musculus</name>
    <name type="common">Mouse</name>
    <dbReference type="NCBI Taxonomy" id="10090"/>
    <lineage>
        <taxon>Eukaryota</taxon>
        <taxon>Metazoa</taxon>
        <taxon>Chordata</taxon>
        <taxon>Craniata</taxon>
        <taxon>Vertebrata</taxon>
        <taxon>Euteleostomi</taxon>
        <taxon>Mammalia</taxon>
        <taxon>Eutheria</taxon>
        <taxon>Euarchontoglires</taxon>
        <taxon>Glires</taxon>
        <taxon>Rodentia</taxon>
        <taxon>Myomorpha</taxon>
        <taxon>Muroidea</taxon>
        <taxon>Muridae</taxon>
        <taxon>Murinae</taxon>
        <taxon>Mus</taxon>
        <taxon>Mus</taxon>
    </lineage>
</organism>
<comment type="function">
    <text evidence="1">Component of the THO subcomplex of the TREX complex which is thought to couple mRNA transcription, processing and nuclear export, and which specifically associates with spliced mRNA and not with unspliced pre-mRNA. Required for efficient export of polyadenylated RNA and spliced mRNA. The THOC1-THOC2-THOC3 core complex alone is sufficient to bind export factor NXF1-NXT1 and promote ATPase activity of DDX39B. TREX is recruited to spliced mRNAs by a transcription-independent mechanism, binds to mRNA upstream of the exon-junction complex (EJC) and is recruited in a splicing- and cap-dependent manner to a region near the 5' end of the mRNA where it functions in mRNA export to the cytoplasm via the TAP/NXF1 pathway.</text>
</comment>
<comment type="subunit">
    <text evidence="1">Component of the THO subcomplex, which is composed of THOC1, THOC2, THOC3, THOC5, THOC6 and THOC7. The THO subcomplex interacts with DDX39B to form the THO-DDX39B complex which multimerizes into a 28-subunit tetrameric assembly. Component of the transcription/export (TREX) complex at least composed of ALYREF/THOC4, DDX39B, SARNP/CIP29, CHTOP and the THO subcomplex; in the complex interacts with THOC2. TREX seems to have a dynamic structure involving ATP-dependent remodeling.</text>
</comment>
<comment type="subcellular location">
    <subcellularLocation>
        <location evidence="2">Nucleus</location>
    </subcellularLocation>
    <subcellularLocation>
        <location evidence="2">Nucleus speckle</location>
    </subcellularLocation>
</comment>
<comment type="similarity">
    <text evidence="2">Belongs to the THOC3 family.</text>
</comment>
<evidence type="ECO:0000250" key="1">
    <source>
        <dbReference type="UniProtKB" id="Q96J01"/>
    </source>
</evidence>
<evidence type="ECO:0000305" key="2"/>
<accession>Q8VE80</accession>
<accession>Q9CWI8</accession>
<proteinExistence type="evidence at transcript level"/>
<reference key="1">
    <citation type="journal article" date="2005" name="Science">
        <title>The transcriptional landscape of the mammalian genome.</title>
        <authorList>
            <person name="Carninci P."/>
            <person name="Kasukawa T."/>
            <person name="Katayama S."/>
            <person name="Gough J."/>
            <person name="Frith M.C."/>
            <person name="Maeda N."/>
            <person name="Oyama R."/>
            <person name="Ravasi T."/>
            <person name="Lenhard B."/>
            <person name="Wells C."/>
            <person name="Kodzius R."/>
            <person name="Shimokawa K."/>
            <person name="Bajic V.B."/>
            <person name="Brenner S.E."/>
            <person name="Batalov S."/>
            <person name="Forrest A.R."/>
            <person name="Zavolan M."/>
            <person name="Davis M.J."/>
            <person name="Wilming L.G."/>
            <person name="Aidinis V."/>
            <person name="Allen J.E."/>
            <person name="Ambesi-Impiombato A."/>
            <person name="Apweiler R."/>
            <person name="Aturaliya R.N."/>
            <person name="Bailey T.L."/>
            <person name="Bansal M."/>
            <person name="Baxter L."/>
            <person name="Beisel K.W."/>
            <person name="Bersano T."/>
            <person name="Bono H."/>
            <person name="Chalk A.M."/>
            <person name="Chiu K.P."/>
            <person name="Choudhary V."/>
            <person name="Christoffels A."/>
            <person name="Clutterbuck D.R."/>
            <person name="Crowe M.L."/>
            <person name="Dalla E."/>
            <person name="Dalrymple B.P."/>
            <person name="de Bono B."/>
            <person name="Della Gatta G."/>
            <person name="di Bernardo D."/>
            <person name="Down T."/>
            <person name="Engstrom P."/>
            <person name="Fagiolini M."/>
            <person name="Faulkner G."/>
            <person name="Fletcher C.F."/>
            <person name="Fukushima T."/>
            <person name="Furuno M."/>
            <person name="Futaki S."/>
            <person name="Gariboldi M."/>
            <person name="Georgii-Hemming P."/>
            <person name="Gingeras T.R."/>
            <person name="Gojobori T."/>
            <person name="Green R.E."/>
            <person name="Gustincich S."/>
            <person name="Harbers M."/>
            <person name="Hayashi Y."/>
            <person name="Hensch T.K."/>
            <person name="Hirokawa N."/>
            <person name="Hill D."/>
            <person name="Huminiecki L."/>
            <person name="Iacono M."/>
            <person name="Ikeo K."/>
            <person name="Iwama A."/>
            <person name="Ishikawa T."/>
            <person name="Jakt M."/>
            <person name="Kanapin A."/>
            <person name="Katoh M."/>
            <person name="Kawasawa Y."/>
            <person name="Kelso J."/>
            <person name="Kitamura H."/>
            <person name="Kitano H."/>
            <person name="Kollias G."/>
            <person name="Krishnan S.P."/>
            <person name="Kruger A."/>
            <person name="Kummerfeld S.K."/>
            <person name="Kurochkin I.V."/>
            <person name="Lareau L.F."/>
            <person name="Lazarevic D."/>
            <person name="Lipovich L."/>
            <person name="Liu J."/>
            <person name="Liuni S."/>
            <person name="McWilliam S."/>
            <person name="Madan Babu M."/>
            <person name="Madera M."/>
            <person name="Marchionni L."/>
            <person name="Matsuda H."/>
            <person name="Matsuzawa S."/>
            <person name="Miki H."/>
            <person name="Mignone F."/>
            <person name="Miyake S."/>
            <person name="Morris K."/>
            <person name="Mottagui-Tabar S."/>
            <person name="Mulder N."/>
            <person name="Nakano N."/>
            <person name="Nakauchi H."/>
            <person name="Ng P."/>
            <person name="Nilsson R."/>
            <person name="Nishiguchi S."/>
            <person name="Nishikawa S."/>
            <person name="Nori F."/>
            <person name="Ohara O."/>
            <person name="Okazaki Y."/>
            <person name="Orlando V."/>
            <person name="Pang K.C."/>
            <person name="Pavan W.J."/>
            <person name="Pavesi G."/>
            <person name="Pesole G."/>
            <person name="Petrovsky N."/>
            <person name="Piazza S."/>
            <person name="Reed J."/>
            <person name="Reid J.F."/>
            <person name="Ring B.Z."/>
            <person name="Ringwald M."/>
            <person name="Rost B."/>
            <person name="Ruan Y."/>
            <person name="Salzberg S.L."/>
            <person name="Sandelin A."/>
            <person name="Schneider C."/>
            <person name="Schoenbach C."/>
            <person name="Sekiguchi K."/>
            <person name="Semple C.A."/>
            <person name="Seno S."/>
            <person name="Sessa L."/>
            <person name="Sheng Y."/>
            <person name="Shibata Y."/>
            <person name="Shimada H."/>
            <person name="Shimada K."/>
            <person name="Silva D."/>
            <person name="Sinclair B."/>
            <person name="Sperling S."/>
            <person name="Stupka E."/>
            <person name="Sugiura K."/>
            <person name="Sultana R."/>
            <person name="Takenaka Y."/>
            <person name="Taki K."/>
            <person name="Tammoja K."/>
            <person name="Tan S.L."/>
            <person name="Tang S."/>
            <person name="Taylor M.S."/>
            <person name="Tegner J."/>
            <person name="Teichmann S.A."/>
            <person name="Ueda H.R."/>
            <person name="van Nimwegen E."/>
            <person name="Verardo R."/>
            <person name="Wei C.L."/>
            <person name="Yagi K."/>
            <person name="Yamanishi H."/>
            <person name="Zabarovsky E."/>
            <person name="Zhu S."/>
            <person name="Zimmer A."/>
            <person name="Hide W."/>
            <person name="Bult C."/>
            <person name="Grimmond S.M."/>
            <person name="Teasdale R.D."/>
            <person name="Liu E.T."/>
            <person name="Brusic V."/>
            <person name="Quackenbush J."/>
            <person name="Wahlestedt C."/>
            <person name="Mattick J.S."/>
            <person name="Hume D.A."/>
            <person name="Kai C."/>
            <person name="Sasaki D."/>
            <person name="Tomaru Y."/>
            <person name="Fukuda S."/>
            <person name="Kanamori-Katayama M."/>
            <person name="Suzuki M."/>
            <person name="Aoki J."/>
            <person name="Arakawa T."/>
            <person name="Iida J."/>
            <person name="Imamura K."/>
            <person name="Itoh M."/>
            <person name="Kato T."/>
            <person name="Kawaji H."/>
            <person name="Kawagashira N."/>
            <person name="Kawashima T."/>
            <person name="Kojima M."/>
            <person name="Kondo S."/>
            <person name="Konno H."/>
            <person name="Nakano K."/>
            <person name="Ninomiya N."/>
            <person name="Nishio T."/>
            <person name="Okada M."/>
            <person name="Plessy C."/>
            <person name="Shibata K."/>
            <person name="Shiraki T."/>
            <person name="Suzuki S."/>
            <person name="Tagami M."/>
            <person name="Waki K."/>
            <person name="Watahiki A."/>
            <person name="Okamura-Oho Y."/>
            <person name="Suzuki H."/>
            <person name="Kawai J."/>
            <person name="Hayashizaki Y."/>
        </authorList>
    </citation>
    <scope>NUCLEOTIDE SEQUENCE [LARGE SCALE MRNA]</scope>
    <source>
        <strain>C57BL/6J</strain>
        <tissue>Embryonic stem cell</tissue>
    </source>
</reference>
<reference key="2">
    <citation type="journal article" date="2004" name="Genome Res.">
        <title>The status, quality, and expansion of the NIH full-length cDNA project: the Mammalian Gene Collection (MGC).</title>
        <authorList>
            <consortium name="The MGC Project Team"/>
        </authorList>
    </citation>
    <scope>NUCLEOTIDE SEQUENCE [LARGE SCALE MRNA]</scope>
    <source>
        <tissue>Mammary tumor</tissue>
    </source>
</reference>